<protein>
    <recommendedName>
        <fullName evidence="19">Apoptosis inhibitor 5</fullName>
        <shortName>API-5</shortName>
    </recommendedName>
    <alternativeName>
        <fullName>Antiapoptosis clone 11 protein</fullName>
        <shortName>AAC-11</shortName>
    </alternativeName>
    <alternativeName>
        <fullName>Cell migration-inducing gene 8 protein</fullName>
    </alternativeName>
    <alternativeName>
        <fullName>Fibroblast growth factor 2-interacting factor</fullName>
        <shortName>FIF</shortName>
    </alternativeName>
    <alternativeName>
        <fullName>Protein XAGL</fullName>
    </alternativeName>
</protein>
<reference key="1">
    <citation type="journal article" date="1997" name="Cancer Res.">
        <title>AAC-11, a novel cDNA that inhibits apoptosis after growth factor withdrawal.</title>
        <authorList>
            <person name="Tewari M."/>
            <person name="Yu M."/>
            <person name="Ross B."/>
            <person name="Dean C."/>
            <person name="Giordano A."/>
            <person name="Rubin R."/>
        </authorList>
    </citation>
    <scope>NUCLEOTIDE SEQUENCE [MRNA] (ISOFORM 4)</scope>
</reference>
<reference key="2">
    <citation type="journal article" date="1999" name="Cytogenet. Cell Genet.">
        <title>Molecular cloning and fine mapping of API5L1, a novel human gene strongly related to an antiapoptotic gene.</title>
        <authorList>
            <person name="Gianfrancesco F."/>
            <person name="Esposito T."/>
            <person name="Ciccodicola A."/>
            <person name="D'Esposito M."/>
            <person name="Mazzarella R."/>
            <person name="D'Urso M."/>
            <person name="Forabosco A."/>
        </authorList>
    </citation>
    <scope>NUCLEOTIDE SEQUENCE [MRNA] (ISOFORM 2)</scope>
</reference>
<reference key="3">
    <citation type="journal article" date="2000" name="Mol. Endocrinol.">
        <title>FIF [fibroblast growth factor-2 (FGF-2)-interacting-factor], a nuclear putatively antiapoptotic factor, interacts specifically with FGF-2.</title>
        <authorList>
            <person name="Van den Berghe L."/>
            <person name="Laurell H."/>
            <person name="Huez I."/>
            <person name="Zanibellato C."/>
            <person name="Prats H."/>
            <person name="Bugler B."/>
        </authorList>
    </citation>
    <scope>NUCLEOTIDE SEQUENCE [MRNA] (ISOFORM 2)</scope>
    <scope>NUCLEOTIDE SEQUENCE [MRNA] OF 72-524 (ISOFORM 1)</scope>
    <scope>IDENTIFICATION OF ISOFORM 3</scope>
    <scope>SUBCELLULAR LOCATION</scope>
    <scope>TISSUE SPECIFICITY</scope>
    <scope>INTERACTION WITH FGF2</scope>
    <source>
        <tissue>Liver</tissue>
    </source>
</reference>
<reference key="4">
    <citation type="submission" date="2003-06" db="EMBL/GenBank/DDBJ databases">
        <title>Identification of a human cell migration gene.</title>
        <authorList>
            <person name="Kim J.W."/>
        </authorList>
    </citation>
    <scope>NUCLEOTIDE SEQUENCE [LARGE SCALE MRNA] (ISOFORM 2)</scope>
</reference>
<reference key="5">
    <citation type="submission" date="2003-05" db="EMBL/GenBank/DDBJ databases">
        <title>Cloning of human full-length CDSs in BD Creator(TM) system donor vector.</title>
        <authorList>
            <person name="Kalnine N."/>
            <person name="Chen X."/>
            <person name="Rolfs A."/>
            <person name="Halleck A."/>
            <person name="Hines L."/>
            <person name="Eisenstein S."/>
            <person name="Koundinya M."/>
            <person name="Raphael J."/>
            <person name="Moreira D."/>
            <person name="Kelley T."/>
            <person name="LaBaer J."/>
            <person name="Lin Y."/>
            <person name="Phelan M."/>
            <person name="Farmer A."/>
        </authorList>
    </citation>
    <scope>NUCLEOTIDE SEQUENCE [LARGE SCALE MRNA] (ISOFORM 2)</scope>
</reference>
<reference key="6">
    <citation type="submission" date="2003-03" db="EMBL/GenBank/DDBJ databases">
        <authorList>
            <consortium name="NIEHS SNPs program"/>
        </authorList>
    </citation>
    <scope>NUCLEOTIDE SEQUENCE [GENOMIC DNA]</scope>
    <scope>VARIANTS SER-276; VAL-300 AND SER-493</scope>
</reference>
<reference key="7">
    <citation type="journal article" date="2004" name="Nat. Genet.">
        <title>Complete sequencing and characterization of 21,243 full-length human cDNAs.</title>
        <authorList>
            <person name="Ota T."/>
            <person name="Suzuki Y."/>
            <person name="Nishikawa T."/>
            <person name="Otsuki T."/>
            <person name="Sugiyama T."/>
            <person name="Irie R."/>
            <person name="Wakamatsu A."/>
            <person name="Hayashi K."/>
            <person name="Sato H."/>
            <person name="Nagai K."/>
            <person name="Kimura K."/>
            <person name="Makita H."/>
            <person name="Sekine M."/>
            <person name="Obayashi M."/>
            <person name="Nishi T."/>
            <person name="Shibahara T."/>
            <person name="Tanaka T."/>
            <person name="Ishii S."/>
            <person name="Yamamoto J."/>
            <person name="Saito K."/>
            <person name="Kawai Y."/>
            <person name="Isono Y."/>
            <person name="Nakamura Y."/>
            <person name="Nagahari K."/>
            <person name="Murakami K."/>
            <person name="Yasuda T."/>
            <person name="Iwayanagi T."/>
            <person name="Wagatsuma M."/>
            <person name="Shiratori A."/>
            <person name="Sudo H."/>
            <person name="Hosoiri T."/>
            <person name="Kaku Y."/>
            <person name="Kodaira H."/>
            <person name="Kondo H."/>
            <person name="Sugawara M."/>
            <person name="Takahashi M."/>
            <person name="Kanda K."/>
            <person name="Yokoi T."/>
            <person name="Furuya T."/>
            <person name="Kikkawa E."/>
            <person name="Omura Y."/>
            <person name="Abe K."/>
            <person name="Kamihara K."/>
            <person name="Katsuta N."/>
            <person name="Sato K."/>
            <person name="Tanikawa M."/>
            <person name="Yamazaki M."/>
            <person name="Ninomiya K."/>
            <person name="Ishibashi T."/>
            <person name="Yamashita H."/>
            <person name="Murakawa K."/>
            <person name="Fujimori K."/>
            <person name="Tanai H."/>
            <person name="Kimata M."/>
            <person name="Watanabe M."/>
            <person name="Hiraoka S."/>
            <person name="Chiba Y."/>
            <person name="Ishida S."/>
            <person name="Ono Y."/>
            <person name="Takiguchi S."/>
            <person name="Watanabe S."/>
            <person name="Yosida M."/>
            <person name="Hotuta T."/>
            <person name="Kusano J."/>
            <person name="Kanehori K."/>
            <person name="Takahashi-Fujii A."/>
            <person name="Hara H."/>
            <person name="Tanase T.-O."/>
            <person name="Nomura Y."/>
            <person name="Togiya S."/>
            <person name="Komai F."/>
            <person name="Hara R."/>
            <person name="Takeuchi K."/>
            <person name="Arita M."/>
            <person name="Imose N."/>
            <person name="Musashino K."/>
            <person name="Yuuki H."/>
            <person name="Oshima A."/>
            <person name="Sasaki N."/>
            <person name="Aotsuka S."/>
            <person name="Yoshikawa Y."/>
            <person name="Matsunawa H."/>
            <person name="Ichihara T."/>
            <person name="Shiohata N."/>
            <person name="Sano S."/>
            <person name="Moriya S."/>
            <person name="Momiyama H."/>
            <person name="Satoh N."/>
            <person name="Takami S."/>
            <person name="Terashima Y."/>
            <person name="Suzuki O."/>
            <person name="Nakagawa S."/>
            <person name="Senoh A."/>
            <person name="Mizoguchi H."/>
            <person name="Goto Y."/>
            <person name="Shimizu F."/>
            <person name="Wakebe H."/>
            <person name="Hishigaki H."/>
            <person name="Watanabe T."/>
            <person name="Sugiyama A."/>
            <person name="Takemoto M."/>
            <person name="Kawakami B."/>
            <person name="Yamazaki M."/>
            <person name="Watanabe K."/>
            <person name="Kumagai A."/>
            <person name="Itakura S."/>
            <person name="Fukuzumi Y."/>
            <person name="Fujimori Y."/>
            <person name="Komiyama M."/>
            <person name="Tashiro H."/>
            <person name="Tanigami A."/>
            <person name="Fujiwara T."/>
            <person name="Ono T."/>
            <person name="Yamada K."/>
            <person name="Fujii Y."/>
            <person name="Ozaki K."/>
            <person name="Hirao M."/>
            <person name="Ohmori Y."/>
            <person name="Kawabata A."/>
            <person name="Hikiji T."/>
            <person name="Kobatake N."/>
            <person name="Inagaki H."/>
            <person name="Ikema Y."/>
            <person name="Okamoto S."/>
            <person name="Okitani R."/>
            <person name="Kawakami T."/>
            <person name="Noguchi S."/>
            <person name="Itoh T."/>
            <person name="Shigeta K."/>
            <person name="Senba T."/>
            <person name="Matsumura K."/>
            <person name="Nakajima Y."/>
            <person name="Mizuno T."/>
            <person name="Morinaga M."/>
            <person name="Sasaki M."/>
            <person name="Togashi T."/>
            <person name="Oyama M."/>
            <person name="Hata H."/>
            <person name="Watanabe M."/>
            <person name="Komatsu T."/>
            <person name="Mizushima-Sugano J."/>
            <person name="Satoh T."/>
            <person name="Shirai Y."/>
            <person name="Takahashi Y."/>
            <person name="Nakagawa K."/>
            <person name="Okumura K."/>
            <person name="Nagase T."/>
            <person name="Nomura N."/>
            <person name="Kikuchi H."/>
            <person name="Masuho Y."/>
            <person name="Yamashita R."/>
            <person name="Nakai K."/>
            <person name="Yada T."/>
            <person name="Nakamura Y."/>
            <person name="Ohara O."/>
            <person name="Isogai T."/>
            <person name="Sugano S."/>
        </authorList>
    </citation>
    <scope>NUCLEOTIDE SEQUENCE [LARGE SCALE MRNA] (ISOFORMS 4; 5 AND 6)</scope>
    <source>
        <tissue>Brain</tissue>
        <tissue>Trachea</tissue>
    </source>
</reference>
<reference key="8">
    <citation type="journal article" date="2006" name="Nature">
        <title>Human chromosome 11 DNA sequence and analysis including novel gene identification.</title>
        <authorList>
            <person name="Taylor T.D."/>
            <person name="Noguchi H."/>
            <person name="Totoki Y."/>
            <person name="Toyoda A."/>
            <person name="Kuroki Y."/>
            <person name="Dewar K."/>
            <person name="Lloyd C."/>
            <person name="Itoh T."/>
            <person name="Takeda T."/>
            <person name="Kim D.-W."/>
            <person name="She X."/>
            <person name="Barlow K.F."/>
            <person name="Bloom T."/>
            <person name="Bruford E."/>
            <person name="Chang J.L."/>
            <person name="Cuomo C.A."/>
            <person name="Eichler E."/>
            <person name="FitzGerald M.G."/>
            <person name="Jaffe D.B."/>
            <person name="LaButti K."/>
            <person name="Nicol R."/>
            <person name="Park H.-S."/>
            <person name="Seaman C."/>
            <person name="Sougnez C."/>
            <person name="Yang X."/>
            <person name="Zimmer A.R."/>
            <person name="Zody M.C."/>
            <person name="Birren B.W."/>
            <person name="Nusbaum C."/>
            <person name="Fujiyama A."/>
            <person name="Hattori M."/>
            <person name="Rogers J."/>
            <person name="Lander E.S."/>
            <person name="Sakaki Y."/>
        </authorList>
    </citation>
    <scope>NUCLEOTIDE SEQUENCE [LARGE SCALE GENOMIC DNA]</scope>
</reference>
<reference key="9">
    <citation type="submission" date="2005-09" db="EMBL/GenBank/DDBJ databases">
        <authorList>
            <person name="Mural R.J."/>
            <person name="Istrail S."/>
            <person name="Sutton G.G."/>
            <person name="Florea L."/>
            <person name="Halpern A.L."/>
            <person name="Mobarry C.M."/>
            <person name="Lippert R."/>
            <person name="Walenz B."/>
            <person name="Shatkay H."/>
            <person name="Dew I."/>
            <person name="Miller J.R."/>
            <person name="Flanigan M.J."/>
            <person name="Edwards N.J."/>
            <person name="Bolanos R."/>
            <person name="Fasulo D."/>
            <person name="Halldorsson B.V."/>
            <person name="Hannenhalli S."/>
            <person name="Turner R."/>
            <person name="Yooseph S."/>
            <person name="Lu F."/>
            <person name="Nusskern D.R."/>
            <person name="Shue B.C."/>
            <person name="Zheng X.H."/>
            <person name="Zhong F."/>
            <person name="Delcher A.L."/>
            <person name="Huson D.H."/>
            <person name="Kravitz S.A."/>
            <person name="Mouchard L."/>
            <person name="Reinert K."/>
            <person name="Remington K.A."/>
            <person name="Clark A.G."/>
            <person name="Waterman M.S."/>
            <person name="Eichler E.E."/>
            <person name="Adams M.D."/>
            <person name="Hunkapiller M.W."/>
            <person name="Myers E.W."/>
            <person name="Venter J.C."/>
        </authorList>
    </citation>
    <scope>NUCLEOTIDE SEQUENCE [LARGE SCALE GENOMIC DNA]</scope>
</reference>
<reference key="10">
    <citation type="journal article" date="2004" name="Genome Res.">
        <title>The status, quality, and expansion of the NIH full-length cDNA project: the Mammalian Gene Collection (MGC).</title>
        <authorList>
            <consortium name="The MGC Project Team"/>
        </authorList>
    </citation>
    <scope>NUCLEOTIDE SEQUENCE [LARGE SCALE MRNA] (ISOFORM 2)</scope>
    <source>
        <tissue>Lymph</tissue>
    </source>
</reference>
<reference key="11">
    <citation type="submission" date="2008-12" db="UniProtKB">
        <authorList>
            <person name="Bienvenut W.V."/>
            <person name="Lilla S."/>
            <person name="von Kriegsheim A."/>
            <person name="Lempens A."/>
            <person name="Kolch W."/>
        </authorList>
    </citation>
    <scope>PROTEIN SEQUENCE OF 2-9; 26-36; 131-148; 161-169; 244-251 AND 427-436</scope>
    <scope>CLEAVAGE OF INITIATOR METHIONINE</scope>
    <scope>IDENTIFICATION BY MASS SPECTROMETRY</scope>
    <source>
        <tissue>Ovarian carcinoma</tissue>
    </source>
</reference>
<reference key="12">
    <citation type="journal article" date="1996" name="Genome Res.">
        <title>Generation and analysis of 280,000 human expressed sequence tags.</title>
        <authorList>
            <person name="Hillier L.D."/>
            <person name="Lennon G."/>
            <person name="Becker M."/>
            <person name="Bonaldo M.F."/>
            <person name="Chiapelli B."/>
            <person name="Chissoe S."/>
            <person name="Dietrich N."/>
            <person name="DuBuque T."/>
            <person name="Favello A."/>
            <person name="Gish W."/>
            <person name="Hawkins M."/>
            <person name="Hultman M."/>
            <person name="Kucaba T."/>
            <person name="Lacy M."/>
            <person name="Le M."/>
            <person name="Le N."/>
            <person name="Mardis E."/>
            <person name="Moore B."/>
            <person name="Morris M."/>
            <person name="Parsons J."/>
            <person name="Prange C."/>
            <person name="Rifkin L."/>
            <person name="Rohlfing T."/>
            <person name="Schellenberg K."/>
            <person name="Bento Soares M."/>
            <person name="Tan F."/>
            <person name="Thierry-Meg J."/>
            <person name="Trevaskis E."/>
            <person name="Underwood K."/>
            <person name="Wohldman P."/>
            <person name="Waterston R."/>
            <person name="Wilson R."/>
            <person name="Marra M."/>
        </authorList>
    </citation>
    <scope>NUCLEOTIDE SEQUENCE [MRNA] OF 384-524 (ISOFORM 3)</scope>
</reference>
<reference key="13">
    <citation type="journal article" date="2000" name="Lab. Invest.">
        <title>AAC-11 overexpression induces invasion and protects cervical cancer cells from apoptosis.</title>
        <authorList>
            <person name="Kim J.W."/>
            <person name="Cho H.S."/>
            <person name="Kim J.H."/>
            <person name="Hur S.Y."/>
            <person name="Kim T.E."/>
            <person name="Lee J.M."/>
            <person name="Kim I.K."/>
            <person name="Namkoong S.E."/>
        </authorList>
    </citation>
    <scope>FUNCTION</scope>
    <scope>TISSUE SPECIFICITY</scope>
</reference>
<reference key="14">
    <citation type="journal article" date="2001" name="Lung Cancer">
        <title>Expression of the antiapoptosis gene, AAC-11, as a prognosis marker in non-small cell lung cancer.</title>
        <authorList>
            <person name="Sasaki H."/>
            <person name="Moriyama S."/>
            <person name="Yukiue H."/>
            <person name="Kobayashi Y."/>
            <person name="Nakashima Y."/>
            <person name="Kaji M."/>
            <person name="Fukai I."/>
            <person name="Kiriyama M."/>
            <person name="Yamakawa Y."/>
            <person name="Fujii Y."/>
        </authorList>
    </citation>
    <scope>TISSUE SPECIFICITY</scope>
</reference>
<reference key="15">
    <citation type="journal article" date="2006" name="Cell">
        <title>Global, in vivo, and site-specific phosphorylation dynamics in signaling networks.</title>
        <authorList>
            <person name="Olsen J.V."/>
            <person name="Blagoev B."/>
            <person name="Gnad F."/>
            <person name="Macek B."/>
            <person name="Kumar C."/>
            <person name="Mortensen P."/>
            <person name="Mann M."/>
        </authorList>
    </citation>
    <scope>IDENTIFICATION BY MASS SPECTROMETRY [LARGE SCALE ANALYSIS]</scope>
    <source>
        <tissue>Cervix carcinoma</tissue>
    </source>
</reference>
<reference key="16">
    <citation type="journal article" date="2006" name="PLoS Genet.">
        <title>Functional identification of Api5 as a suppressor of E2F-dependent apoptosis in vivo.</title>
        <authorList>
            <person name="Morris E.J."/>
            <person name="Michaud W.A."/>
            <person name="Ji J.Y."/>
            <person name="Moon N.S."/>
            <person name="Rocco J.W."/>
            <person name="Dyson N.J."/>
        </authorList>
    </citation>
    <scope>FUNCTION</scope>
</reference>
<reference key="17">
    <citation type="journal article" date="2007" name="J. Leukoc. Biol.">
        <title>The antiapoptotic protein Api5 and its partner, high molecular weight FGF2, are up-regulated in B cell chronic lymphoid leukemia.</title>
        <authorList>
            <person name="Krejci P."/>
            <person name="Pejchalova K."/>
            <person name="Rosenbloom B.E."/>
            <person name="Rosenfelt F.P."/>
            <person name="Tran E.L."/>
            <person name="Laurell H."/>
            <person name="Wilcox W.R."/>
        </authorList>
    </citation>
    <scope>TISSUE SPECIFICITY</scope>
</reference>
<reference key="18">
    <citation type="journal article" date="2009" name="EMBO J.">
        <title>The antiapoptotic protein AAC-11 interacts with and regulates Acinus-mediated DNA fragmentation.</title>
        <authorList>
            <person name="Rigou P."/>
            <person name="Piddubnyak V."/>
            <person name="Faye A."/>
            <person name="Rain J.-C."/>
            <person name="Michel L."/>
            <person name="Calvo F."/>
            <person name="Poyet J.-L."/>
        </authorList>
    </citation>
    <scope>FUNCTION</scope>
    <scope>INTERACTION WITH ACIN1</scope>
    <scope>TISSUE SPECIFICITY</scope>
</reference>
<reference key="19">
    <citation type="journal article" date="2010" name="Sci. Signal.">
        <title>Quantitative phosphoproteomics reveals widespread full phosphorylation site occupancy during mitosis.</title>
        <authorList>
            <person name="Olsen J.V."/>
            <person name="Vermeulen M."/>
            <person name="Santamaria A."/>
            <person name="Kumar C."/>
            <person name="Miller M.L."/>
            <person name="Jensen L.J."/>
            <person name="Gnad F."/>
            <person name="Cox J."/>
            <person name="Jensen T.S."/>
            <person name="Nigg E.A."/>
            <person name="Brunak S."/>
            <person name="Mann M."/>
        </authorList>
    </citation>
    <scope>PHOSPHORYLATION [LARGE SCALE ANALYSIS] AT SER-464</scope>
    <scope>IDENTIFICATION BY MASS SPECTROMETRY [LARGE SCALE ANALYSIS]</scope>
    <source>
        <tissue>Cervix carcinoma</tissue>
    </source>
</reference>
<reference key="20">
    <citation type="journal article" date="2011" name="BMC Syst. Biol.">
        <title>Initial characterization of the human central proteome.</title>
        <authorList>
            <person name="Burkard T.R."/>
            <person name="Planyavsky M."/>
            <person name="Kaupe I."/>
            <person name="Breitwieser F.P."/>
            <person name="Buerckstuemmer T."/>
            <person name="Bennett K.L."/>
            <person name="Superti-Furga G."/>
            <person name="Colinge J."/>
        </authorList>
    </citation>
    <scope>IDENTIFICATION BY MASS SPECTROMETRY [LARGE SCALE ANALYSIS]</scope>
</reference>
<reference key="21">
    <citation type="journal article" date="2011" name="Sci. Signal.">
        <title>System-wide temporal characterization of the proteome and phosphoproteome of human embryonic stem cell differentiation.</title>
        <authorList>
            <person name="Rigbolt K.T."/>
            <person name="Prokhorova T.A."/>
            <person name="Akimov V."/>
            <person name="Henningsen J."/>
            <person name="Johansen P.T."/>
            <person name="Kratchmarova I."/>
            <person name="Kassem M."/>
            <person name="Mann M."/>
            <person name="Olsen J.V."/>
            <person name="Blagoev B."/>
        </authorList>
    </citation>
    <scope>PHOSPHORYLATION [LARGE SCALE ANALYSIS] AT SER-462 AND SER-464</scope>
    <scope>IDENTIFICATION BY MASS SPECTROMETRY [LARGE SCALE ANALYSIS]</scope>
</reference>
<reference key="22">
    <citation type="journal article" date="2012" name="Proc. Natl. Acad. Sci. U.S.A.">
        <title>N-terminal acetylome analyses and functional insights of the N-terminal acetyltransferase NatB.</title>
        <authorList>
            <person name="Van Damme P."/>
            <person name="Lasa M."/>
            <person name="Polevoda B."/>
            <person name="Gazquez C."/>
            <person name="Elosegui-Artola A."/>
            <person name="Kim D.S."/>
            <person name="De Juan-Pardo E."/>
            <person name="Demeyer K."/>
            <person name="Hole K."/>
            <person name="Larrea E."/>
            <person name="Timmerman E."/>
            <person name="Prieto J."/>
            <person name="Arnesen T."/>
            <person name="Sherman F."/>
            <person name="Gevaert K."/>
            <person name="Aldabe R."/>
        </authorList>
    </citation>
    <scope>IDENTIFICATION BY MASS SPECTROMETRY [LARGE SCALE ANALYSIS]</scope>
</reference>
<reference key="23">
    <citation type="journal article" date="2013" name="J. Proteome Res.">
        <title>Toward a comprehensive characterization of a human cancer cell phosphoproteome.</title>
        <authorList>
            <person name="Zhou H."/>
            <person name="Di Palma S."/>
            <person name="Preisinger C."/>
            <person name="Peng M."/>
            <person name="Polat A.N."/>
            <person name="Heck A.J."/>
            <person name="Mohammed S."/>
        </authorList>
    </citation>
    <scope>PHOSPHORYLATION [LARGE SCALE ANALYSIS] AT THR-399</scope>
    <scope>IDENTIFICATION BY MASS SPECTROMETRY [LARGE SCALE ANALYSIS]</scope>
    <source>
        <tissue>Cervix carcinoma</tissue>
        <tissue>Erythroleukemia</tissue>
    </source>
</reference>
<reference key="24">
    <citation type="journal article" date="2014" name="J. Proteomics">
        <title>An enzyme assisted RP-RPLC approach for in-depth analysis of human liver phosphoproteome.</title>
        <authorList>
            <person name="Bian Y."/>
            <person name="Song C."/>
            <person name="Cheng K."/>
            <person name="Dong M."/>
            <person name="Wang F."/>
            <person name="Huang J."/>
            <person name="Sun D."/>
            <person name="Wang L."/>
            <person name="Ye M."/>
            <person name="Zou H."/>
        </authorList>
    </citation>
    <scope>PHOSPHORYLATION [LARGE SCALE ANALYSIS] AT SER-464</scope>
    <scope>IDENTIFICATION BY MASS SPECTROMETRY [LARGE SCALE ANALYSIS]</scope>
    <source>
        <tissue>Liver</tissue>
    </source>
</reference>
<reference key="25">
    <citation type="journal article" date="2014" name="Mol. Cell. Proteomics">
        <title>Immunoaffinity enrichment and mass spectrometry analysis of protein methylation.</title>
        <authorList>
            <person name="Guo A."/>
            <person name="Gu H."/>
            <person name="Zhou J."/>
            <person name="Mulhern D."/>
            <person name="Wang Y."/>
            <person name="Lee K.A."/>
            <person name="Yang V."/>
            <person name="Aguiar M."/>
            <person name="Kornhauser J."/>
            <person name="Jia X."/>
            <person name="Ren J."/>
            <person name="Beausoleil S.A."/>
            <person name="Silva J.C."/>
            <person name="Vemulapalli V."/>
            <person name="Bedford M.T."/>
            <person name="Comb M.J."/>
        </authorList>
    </citation>
    <scope>METHYLATION [LARGE SCALE ANALYSIS] AT ARG-500</scope>
    <scope>IDENTIFICATION BY MASS SPECTROMETRY [LARGE SCALE ANALYSIS]</scope>
    <source>
        <tissue>Colon carcinoma</tissue>
    </source>
</reference>
<reference key="26">
    <citation type="journal article" date="2012" name="J. Biol. Chem.">
        <title>Helical repeat structure of apoptosis inhibitor 5 reveals protein-protein interaction modules.</title>
        <authorList>
            <person name="Han B.G."/>
            <person name="Kim K.H."/>
            <person name="Lee S.J."/>
            <person name="Jeong K.C."/>
            <person name="Cho J.W."/>
            <person name="Noh K.H."/>
            <person name="Kim T.W."/>
            <person name="Kim S.J."/>
            <person name="Yoon H.J."/>
            <person name="Suh S.W."/>
            <person name="Lee S."/>
            <person name="Lee B.I."/>
        </authorList>
    </citation>
    <scope>X-RAY CRYSTALLOGRAPHY (2.5 ANGSTROMS) OF 1-498 OF WILD-TYPE AND MUTANT GLN-251</scope>
    <scope>NUCLEAR LOCALIZATION SIGNAL</scope>
    <scope>ACETYLATION AT LYS-251</scope>
    <scope>REPEATS</scope>
    <scope>SUBUNIT</scope>
</reference>
<name>API5_HUMAN</name>
<sequence length="524" mass="59005">MPTVEELYRNYGILADATEQVGQHKDAYQVILDGVKGGTKEKRLAAQFIPKFFKHFPELADSAINAQLDLCEDEDVSIRRQAIKELPQFATGENLPRVADILTQLLQTDDSAEFNLVNNALLSIFKMDAKGTLGGLFSQILQGEDIVRERAIKFLSTKLKTLPDEVLTKEVEELILTESKKVLEDVTGEEFVLFMKILSGLKSLQTVSGRQQLVELVAEQADLEQTFNPSDPDCVDRLLQCTRQAVPLFSKNVHSTRFVTYFCEQVLPNLGTLTTPVEGLDIQLEVLKLLAEMSSFCGDMEKLETNLRKLFDKLLEYMPLPPEEAENGENAGNEEPKLQFSYVECLLYSFHQLGRKLPDFLTAKLNAEKLKDFKIRLQYFARGLQVYIRQLRLALQGKTGEALKTEENKIKVVALKITNNINVLIKDLFHIPPSYKSTVTLSWKPVQKVEIGQKRASEDTTSGSPPKKSSAGPKRDARQIYNPPSGKYSSNLGNFNYEQRGAFRGSRGGRGWGTRGNRSRGRLY</sequence>
<gene>
    <name evidence="20" type="primary">API5</name>
    <name type="ORF">MIG8</name>
</gene>
<keyword id="KW-0002">3D-structure</keyword>
<keyword id="KW-0007">Acetylation</keyword>
<keyword id="KW-0025">Alternative splicing</keyword>
<keyword id="KW-0053">Apoptosis</keyword>
<keyword id="KW-0963">Cytoplasm</keyword>
<keyword id="KW-0903">Direct protein sequencing</keyword>
<keyword id="KW-0488">Methylation</keyword>
<keyword id="KW-0539">Nucleus</keyword>
<keyword id="KW-0597">Phosphoprotein</keyword>
<keyword id="KW-1267">Proteomics identification</keyword>
<keyword id="KW-1185">Reference proteome</keyword>
<keyword id="KW-0677">Repeat</keyword>
<evidence type="ECO:0000250" key="1">
    <source>
        <dbReference type="UniProtKB" id="O35841"/>
    </source>
</evidence>
<evidence type="ECO:0000256" key="2">
    <source>
        <dbReference type="SAM" id="MobiDB-lite"/>
    </source>
</evidence>
<evidence type="ECO:0000269" key="3">
    <source>
    </source>
</evidence>
<evidence type="ECO:0000269" key="4">
    <source>
    </source>
</evidence>
<evidence type="ECO:0000269" key="5">
    <source>
    </source>
</evidence>
<evidence type="ECO:0000269" key="6">
    <source>
    </source>
</evidence>
<evidence type="ECO:0000269" key="7">
    <source>
    </source>
</evidence>
<evidence type="ECO:0000269" key="8">
    <source>
    </source>
</evidence>
<evidence type="ECO:0000269" key="9">
    <source>
    </source>
</evidence>
<evidence type="ECO:0000269" key="10">
    <source ref="11"/>
</evidence>
<evidence type="ECO:0000269" key="11">
    <source ref="6"/>
</evidence>
<evidence type="ECO:0000303" key="12">
    <source>
    </source>
</evidence>
<evidence type="ECO:0000303" key="13">
    <source>
    </source>
</evidence>
<evidence type="ECO:0000303" key="14">
    <source>
    </source>
</evidence>
<evidence type="ECO:0000303" key="15">
    <source>
    </source>
</evidence>
<evidence type="ECO:0000303" key="16">
    <source>
    </source>
</evidence>
<evidence type="ECO:0000303" key="17">
    <source ref="4"/>
</evidence>
<evidence type="ECO:0000303" key="18">
    <source ref="5"/>
</evidence>
<evidence type="ECO:0000305" key="19"/>
<evidence type="ECO:0000312" key="20">
    <source>
        <dbReference type="HGNC" id="HGNC:594"/>
    </source>
</evidence>
<evidence type="ECO:0007744" key="21">
    <source>
    </source>
</evidence>
<evidence type="ECO:0007744" key="22">
    <source>
    </source>
</evidence>
<evidence type="ECO:0007744" key="23">
    <source>
    </source>
</evidence>
<evidence type="ECO:0007744" key="24">
    <source>
    </source>
</evidence>
<evidence type="ECO:0007744" key="25">
    <source>
    </source>
</evidence>
<evidence type="ECO:0007829" key="26">
    <source>
        <dbReference type="PDB" id="3U0R"/>
    </source>
</evidence>
<evidence type="ECO:0007829" key="27">
    <source>
        <dbReference type="PDB" id="3V6A"/>
    </source>
</evidence>
<evidence type="ECO:0007829" key="28">
    <source>
        <dbReference type="PDB" id="6L4O"/>
    </source>
</evidence>
<organism>
    <name type="scientific">Homo sapiens</name>
    <name type="common">Human</name>
    <dbReference type="NCBI Taxonomy" id="9606"/>
    <lineage>
        <taxon>Eukaryota</taxon>
        <taxon>Metazoa</taxon>
        <taxon>Chordata</taxon>
        <taxon>Craniata</taxon>
        <taxon>Vertebrata</taxon>
        <taxon>Euteleostomi</taxon>
        <taxon>Mammalia</taxon>
        <taxon>Eutheria</taxon>
        <taxon>Euarchontoglires</taxon>
        <taxon>Primates</taxon>
        <taxon>Haplorrhini</taxon>
        <taxon>Catarrhini</taxon>
        <taxon>Hominidae</taxon>
        <taxon>Homo</taxon>
    </lineage>
</organism>
<proteinExistence type="evidence at protein level"/>
<dbReference type="EMBL" id="U83857">
    <property type="protein sequence ID" value="AAB86528.1"/>
    <property type="status" value="ALT_SEQ"/>
    <property type="molecule type" value="mRNA"/>
</dbReference>
<dbReference type="EMBL" id="Y15906">
    <property type="protein sequence ID" value="CAA75867.1"/>
    <property type="molecule type" value="mRNA"/>
</dbReference>
<dbReference type="EMBL" id="AF229253">
    <property type="protein sequence ID" value="AAK00737.1"/>
    <property type="molecule type" value="mRNA"/>
</dbReference>
<dbReference type="EMBL" id="AF229254">
    <property type="protein sequence ID" value="AAK00738.1"/>
    <property type="molecule type" value="mRNA"/>
</dbReference>
<dbReference type="EMBL" id="AY311389">
    <property type="protein sequence ID" value="AAQ76714.1"/>
    <property type="molecule type" value="mRNA"/>
</dbReference>
<dbReference type="EMBL" id="BT007093">
    <property type="protein sequence ID" value="AAP35756.1"/>
    <property type="molecule type" value="mRNA"/>
</dbReference>
<dbReference type="EMBL" id="AY265973">
    <property type="protein sequence ID" value="AAO89077.1"/>
    <property type="molecule type" value="Genomic_DNA"/>
</dbReference>
<dbReference type="EMBL" id="AK294724">
    <property type="protein sequence ID" value="BAG57871.1"/>
    <property type="molecule type" value="mRNA"/>
</dbReference>
<dbReference type="EMBL" id="AK299288">
    <property type="protein sequence ID" value="BAG61304.1"/>
    <property type="molecule type" value="mRNA"/>
</dbReference>
<dbReference type="EMBL" id="AK304157">
    <property type="protein sequence ID" value="BAG65045.1"/>
    <property type="molecule type" value="mRNA"/>
</dbReference>
<dbReference type="EMBL" id="AC087276">
    <property type="status" value="NOT_ANNOTATED_CDS"/>
    <property type="molecule type" value="Genomic_DNA"/>
</dbReference>
<dbReference type="EMBL" id="CH471064">
    <property type="protein sequence ID" value="EAW68098.1"/>
    <property type="molecule type" value="Genomic_DNA"/>
</dbReference>
<dbReference type="EMBL" id="CH471064">
    <property type="protein sequence ID" value="EAW68099.1"/>
    <property type="molecule type" value="Genomic_DNA"/>
</dbReference>
<dbReference type="EMBL" id="BC017709">
    <property type="protein sequence ID" value="AAH17709.1"/>
    <property type="molecule type" value="mRNA"/>
</dbReference>
<dbReference type="EMBL" id="W40304">
    <property type="status" value="NOT_ANNOTATED_CDS"/>
    <property type="molecule type" value="mRNA"/>
</dbReference>
<dbReference type="CCDS" id="CCDS31465.1">
    <molecule id="Q9BZZ5-2"/>
</dbReference>
<dbReference type="CCDS" id="CCDS44572.1">
    <molecule id="Q9BZZ5-4"/>
</dbReference>
<dbReference type="CCDS" id="CCDS44573.1">
    <molecule id="Q9BZZ5-5"/>
</dbReference>
<dbReference type="RefSeq" id="NP_001136402.1">
    <molecule id="Q9BZZ5-4"/>
    <property type="nucleotide sequence ID" value="NM_001142930.2"/>
</dbReference>
<dbReference type="RefSeq" id="NP_001136403.1">
    <molecule id="Q9BZZ5-5"/>
    <property type="nucleotide sequence ID" value="NM_001142931.2"/>
</dbReference>
<dbReference type="RefSeq" id="NP_001230676.1">
    <property type="nucleotide sequence ID" value="NM_001243747.1"/>
</dbReference>
<dbReference type="RefSeq" id="NP_006586.1">
    <molecule id="Q9BZZ5-2"/>
    <property type="nucleotide sequence ID" value="NM_006595.4"/>
</dbReference>
<dbReference type="PDB" id="3U0R">
    <property type="method" value="X-ray"/>
    <property type="resolution" value="2.50 A"/>
    <property type="chains" value="A=1-498"/>
</dbReference>
<dbReference type="PDB" id="3V6A">
    <property type="method" value="X-ray"/>
    <property type="resolution" value="2.60 A"/>
    <property type="chains" value="A=1-454"/>
</dbReference>
<dbReference type="PDB" id="6L4O">
    <property type="method" value="X-ray"/>
    <property type="resolution" value="2.60 A"/>
    <property type="chains" value="A=1-524"/>
</dbReference>
<dbReference type="PDBsum" id="3U0R"/>
<dbReference type="PDBsum" id="3V6A"/>
<dbReference type="PDBsum" id="6L4O"/>
<dbReference type="SMR" id="Q9BZZ5"/>
<dbReference type="BioGRID" id="114109">
    <property type="interactions" value="195"/>
</dbReference>
<dbReference type="CORUM" id="Q9BZZ5"/>
<dbReference type="FunCoup" id="Q9BZZ5">
    <property type="interactions" value="5479"/>
</dbReference>
<dbReference type="IntAct" id="Q9BZZ5">
    <property type="interactions" value="45"/>
</dbReference>
<dbReference type="MINT" id="Q9BZZ5"/>
<dbReference type="STRING" id="9606.ENSP00000431391"/>
<dbReference type="GlyGen" id="Q9BZZ5">
    <property type="glycosylation" value="1 site, 1 O-linked glycan (1 site)"/>
</dbReference>
<dbReference type="iPTMnet" id="Q9BZZ5"/>
<dbReference type="PhosphoSitePlus" id="Q9BZZ5"/>
<dbReference type="SwissPalm" id="Q9BZZ5"/>
<dbReference type="BioMuta" id="API5"/>
<dbReference type="DMDM" id="353526346"/>
<dbReference type="jPOST" id="Q9BZZ5"/>
<dbReference type="MassIVE" id="Q9BZZ5"/>
<dbReference type="PaxDb" id="9606-ENSP00000431391"/>
<dbReference type="PeptideAtlas" id="Q9BZZ5"/>
<dbReference type="ProteomicsDB" id="32325"/>
<dbReference type="ProteomicsDB" id="79926">
    <molecule id="Q9BZZ5-4"/>
</dbReference>
<dbReference type="ProteomicsDB" id="79927">
    <molecule id="Q9BZZ5-1"/>
</dbReference>
<dbReference type="ProteomicsDB" id="79928">
    <molecule id="Q9BZZ5-2"/>
</dbReference>
<dbReference type="ProteomicsDB" id="79929">
    <molecule id="Q9BZZ5-3"/>
</dbReference>
<dbReference type="ProteomicsDB" id="79930">
    <molecule id="Q9BZZ5-5"/>
</dbReference>
<dbReference type="Pumba" id="Q9BZZ5"/>
<dbReference type="Antibodypedia" id="13145">
    <property type="antibodies" value="290 antibodies from 33 providers"/>
</dbReference>
<dbReference type="DNASU" id="8539"/>
<dbReference type="Ensembl" id="ENST00000378852.7">
    <molecule id="Q9BZZ5-2"/>
    <property type="protein sequence ID" value="ENSP00000368129.3"/>
    <property type="gene ID" value="ENSG00000166181.13"/>
</dbReference>
<dbReference type="Ensembl" id="ENST00000420461.6">
    <molecule id="Q9BZZ5-5"/>
    <property type="protein sequence ID" value="ENSP00000402540.2"/>
    <property type="gene ID" value="ENSG00000166181.13"/>
</dbReference>
<dbReference type="Ensembl" id="ENST00000455725.6">
    <molecule id="Q9BZZ5-6"/>
    <property type="protein sequence ID" value="ENSP00000399341.2"/>
    <property type="gene ID" value="ENSG00000166181.13"/>
</dbReference>
<dbReference type="Ensembl" id="ENST00000531273.6">
    <molecule id="Q9BZZ5-4"/>
    <property type="protein sequence ID" value="ENSP00000431391.1"/>
    <property type="gene ID" value="ENSG00000166181.13"/>
</dbReference>
<dbReference type="Ensembl" id="ENST00000534600.5">
    <molecule id="Q9BZZ5-1"/>
    <property type="protein sequence ID" value="ENSP00000434462.1"/>
    <property type="gene ID" value="ENSG00000166181.13"/>
</dbReference>
<dbReference type="GeneID" id="8539"/>
<dbReference type="KEGG" id="hsa:8539"/>
<dbReference type="MANE-Select" id="ENST00000531273.6">
    <property type="protein sequence ID" value="ENSP00000431391.1"/>
    <property type="RefSeq nucleotide sequence ID" value="NM_001142930.2"/>
    <property type="RefSeq protein sequence ID" value="NP_001136402.1"/>
</dbReference>
<dbReference type="UCSC" id="uc001mxf.3">
    <molecule id="Q9BZZ5-4"/>
    <property type="organism name" value="human"/>
</dbReference>
<dbReference type="UCSC" id="uc010rfg.2">
    <property type="organism name" value="human"/>
</dbReference>
<dbReference type="AGR" id="HGNC:594"/>
<dbReference type="CTD" id="8539"/>
<dbReference type="DisGeNET" id="8539"/>
<dbReference type="GeneCards" id="API5"/>
<dbReference type="HGNC" id="HGNC:594">
    <property type="gene designation" value="API5"/>
</dbReference>
<dbReference type="HPA" id="ENSG00000166181">
    <property type="expression patterns" value="Low tissue specificity"/>
</dbReference>
<dbReference type="MIM" id="609774">
    <property type="type" value="gene"/>
</dbReference>
<dbReference type="neXtProt" id="NX_Q9BZZ5"/>
<dbReference type="OpenTargets" id="ENSG00000166181"/>
<dbReference type="PharmGKB" id="PA24881"/>
<dbReference type="VEuPathDB" id="HostDB:ENSG00000166181"/>
<dbReference type="eggNOG" id="KOG2213">
    <property type="taxonomic scope" value="Eukaryota"/>
</dbReference>
<dbReference type="GeneTree" id="ENSGT00390000010991"/>
<dbReference type="HOGENOM" id="CLU_037809_1_0_1"/>
<dbReference type="InParanoid" id="Q9BZZ5"/>
<dbReference type="OMA" id="RCIKFLA"/>
<dbReference type="OrthoDB" id="19224at2759"/>
<dbReference type="PAN-GO" id="Q9BZZ5">
    <property type="GO annotations" value="3 GO annotations based on evolutionary models"/>
</dbReference>
<dbReference type="PhylomeDB" id="Q9BZZ5"/>
<dbReference type="TreeFam" id="TF324283"/>
<dbReference type="PathwayCommons" id="Q9BZZ5"/>
<dbReference type="SignaLink" id="Q9BZZ5"/>
<dbReference type="BioGRID-ORCS" id="8539">
    <property type="hits" value="68 hits in 1156 CRISPR screens"/>
</dbReference>
<dbReference type="CD-CODE" id="91857CE7">
    <property type="entry name" value="Nucleolus"/>
</dbReference>
<dbReference type="ChiTaRS" id="API5">
    <property type="organism name" value="human"/>
</dbReference>
<dbReference type="EvolutionaryTrace" id="Q9BZZ5"/>
<dbReference type="GeneWiki" id="API5"/>
<dbReference type="GenomeRNAi" id="8539"/>
<dbReference type="Pharos" id="Q9BZZ5">
    <property type="development level" value="Tbio"/>
</dbReference>
<dbReference type="PRO" id="PR:Q9BZZ5"/>
<dbReference type="Proteomes" id="UP000005640">
    <property type="component" value="Chromosome 11"/>
</dbReference>
<dbReference type="RNAct" id="Q9BZZ5">
    <property type="molecule type" value="protein"/>
</dbReference>
<dbReference type="Bgee" id="ENSG00000166181">
    <property type="expression patterns" value="Expressed in islet of Langerhans and 218 other cell types or tissues"/>
</dbReference>
<dbReference type="ExpressionAtlas" id="Q9BZZ5">
    <property type="expression patterns" value="baseline and differential"/>
</dbReference>
<dbReference type="GO" id="GO:0005737">
    <property type="term" value="C:cytoplasm"/>
    <property type="evidence" value="ECO:0000303"/>
    <property type="project" value="UniProtKB"/>
</dbReference>
<dbReference type="GO" id="GO:0016020">
    <property type="term" value="C:membrane"/>
    <property type="evidence" value="ECO:0007005"/>
    <property type="project" value="UniProtKB"/>
</dbReference>
<dbReference type="GO" id="GO:0016607">
    <property type="term" value="C:nuclear speck"/>
    <property type="evidence" value="ECO:0000314"/>
    <property type="project" value="HPA"/>
</dbReference>
<dbReference type="GO" id="GO:0005634">
    <property type="term" value="C:nucleus"/>
    <property type="evidence" value="ECO:0000314"/>
    <property type="project" value="UniProtKB"/>
</dbReference>
<dbReference type="GO" id="GO:0005681">
    <property type="term" value="C:spliceosomal complex"/>
    <property type="evidence" value="ECO:0000250"/>
    <property type="project" value="UniProtKB"/>
</dbReference>
<dbReference type="GO" id="GO:0017134">
    <property type="term" value="F:fibroblast growth factor binding"/>
    <property type="evidence" value="ECO:0000353"/>
    <property type="project" value="UniProtKB"/>
</dbReference>
<dbReference type="GO" id="GO:0003723">
    <property type="term" value="F:RNA binding"/>
    <property type="evidence" value="ECO:0007005"/>
    <property type="project" value="UniProtKB"/>
</dbReference>
<dbReference type="GO" id="GO:0044346">
    <property type="term" value="P:fibroblast apoptotic process"/>
    <property type="evidence" value="ECO:0007669"/>
    <property type="project" value="Ensembl"/>
</dbReference>
<dbReference type="GO" id="GO:0043066">
    <property type="term" value="P:negative regulation of apoptotic process"/>
    <property type="evidence" value="ECO:0000315"/>
    <property type="project" value="UniProtKB"/>
</dbReference>
<dbReference type="GO" id="GO:2000270">
    <property type="term" value="P:negative regulation of fibroblast apoptotic process"/>
    <property type="evidence" value="ECO:0007669"/>
    <property type="project" value="Ensembl"/>
</dbReference>
<dbReference type="DisProt" id="DP02894">
    <molecule id="Q9BZZ5-2"/>
</dbReference>
<dbReference type="FunFam" id="1.25.10.10:FF:000092">
    <property type="entry name" value="apoptosis inhibitor 5 isoform X2"/>
    <property type="match status" value="1"/>
</dbReference>
<dbReference type="Gene3D" id="1.25.10.10">
    <property type="entry name" value="Leucine-rich Repeat Variant"/>
    <property type="match status" value="1"/>
</dbReference>
<dbReference type="InterPro" id="IPR008383">
    <property type="entry name" value="API5"/>
</dbReference>
<dbReference type="InterPro" id="IPR011989">
    <property type="entry name" value="ARM-like"/>
</dbReference>
<dbReference type="InterPro" id="IPR016024">
    <property type="entry name" value="ARM-type_fold"/>
</dbReference>
<dbReference type="PANTHER" id="PTHR12758:SF19">
    <property type="entry name" value="APOPTOSIS INHIBITOR 5"/>
    <property type="match status" value="1"/>
</dbReference>
<dbReference type="PANTHER" id="PTHR12758">
    <property type="entry name" value="APOPTOSIS INHIBITOR 5-RELATED"/>
    <property type="match status" value="1"/>
</dbReference>
<dbReference type="Pfam" id="PF05918">
    <property type="entry name" value="API5"/>
    <property type="match status" value="1"/>
</dbReference>
<dbReference type="SUPFAM" id="SSF48371">
    <property type="entry name" value="ARM repeat"/>
    <property type="match status" value="1"/>
</dbReference>
<feature type="initiator methionine" description="Removed" evidence="10">
    <location>
        <position position="1"/>
    </location>
</feature>
<feature type="chain" id="PRO_0000064634" description="Apoptosis inhibitor 5">
    <location>
        <begin position="2"/>
        <end position="524"/>
    </location>
</feature>
<feature type="region of interest" description="ARM-like and Heat-like helical repeats">
    <location>
        <begin position="2"/>
        <end position="360"/>
    </location>
</feature>
<feature type="region of interest" description="Leucine-zipper">
    <location>
        <begin position="370"/>
        <end position="391"/>
    </location>
</feature>
<feature type="region of interest" description="Disordered" evidence="2">
    <location>
        <begin position="452"/>
        <end position="524"/>
    </location>
</feature>
<feature type="short sequence motif" description="Nuclear localization signal" evidence="9">
    <location>
        <begin position="454"/>
        <end position="475"/>
    </location>
</feature>
<feature type="compositionally biased region" description="Low complexity" evidence="2">
    <location>
        <begin position="462"/>
        <end position="472"/>
    </location>
</feature>
<feature type="compositionally biased region" description="Polar residues" evidence="2">
    <location>
        <begin position="487"/>
        <end position="497"/>
    </location>
</feature>
<feature type="modified residue" description="N6-acetyllysine" evidence="9">
    <location>
        <position position="251"/>
    </location>
</feature>
<feature type="modified residue" description="Phosphothreonine" evidence="23">
    <location>
        <position position="399"/>
    </location>
</feature>
<feature type="modified residue" description="Phosphoserine" evidence="22">
    <location>
        <position position="462"/>
    </location>
</feature>
<feature type="modified residue" description="Phosphoserine" evidence="21 22 25">
    <location>
        <position position="464"/>
    </location>
</feature>
<feature type="modified residue" description="Phosphoserine" evidence="1">
    <location>
        <position position="469"/>
    </location>
</feature>
<feature type="modified residue" description="Omega-N-methylarginine" evidence="24">
    <location>
        <position position="500"/>
    </location>
</feature>
<feature type="splice variant" id="VSP_057412" description="In isoform 6." evidence="14">
    <original>MPTVEELYRNYGILADATEQVGQ</original>
    <variation>MKQRWRENGIGK</variation>
    <location>
        <begin position="1"/>
        <end position="23"/>
    </location>
</feature>
<feature type="splice variant" id="VSP_043289" description="In isoform 5." evidence="14">
    <location>
        <begin position="24"/>
        <end position="77"/>
    </location>
</feature>
<feature type="splice variant" id="VSP_039761" description="In isoform 3." evidence="16">
    <original>DLFHI</original>
    <variation>AKESQ</variation>
    <location>
        <begin position="427"/>
        <end position="431"/>
    </location>
</feature>
<feature type="splice variant" id="VSP_039762" description="In isoform 3." evidence="16">
    <location>
        <begin position="432"/>
        <end position="510"/>
    </location>
</feature>
<feature type="splice variant" id="VSP_041969" description="In isoform 1." evidence="13">
    <original>EQRGAFRGSRGGR</original>
    <variation>GERFRLGTRNMRD</variation>
    <location>
        <begin position="498"/>
        <end position="510"/>
    </location>
</feature>
<feature type="splice variant" id="VSP_041970" description="In isoform 2 and isoform 5." evidence="12 13 14 15 17 18">
    <original>QRGAFR</original>
    <variation>RSLQGK</variation>
    <location>
        <begin position="499"/>
        <end position="504"/>
    </location>
</feature>
<feature type="splice variant" id="VSP_041971" description="In isoform 2 and isoform 5." evidence="12 13 14 15 17 18">
    <location>
        <begin position="505"/>
        <end position="524"/>
    </location>
</feature>
<feature type="splice variant" id="VSP_041972" description="In isoform 1." evidence="13">
    <location>
        <begin position="511"/>
        <end position="524"/>
    </location>
</feature>
<feature type="sequence variant" id="VAR_021519" evidence="11">
    <original>P</original>
    <variation>S</variation>
    <location>
        <position position="276"/>
    </location>
</feature>
<feature type="sequence variant" id="VAR_021520" description="In dbSNP:rs5743240." evidence="11">
    <original>M</original>
    <variation>V</variation>
    <location>
        <position position="300"/>
    </location>
</feature>
<feature type="sequence variant" id="VAR_021521" description="In dbSNP:rs2862934." evidence="11">
    <original>G</original>
    <variation>S</variation>
    <location>
        <position position="493"/>
    </location>
</feature>
<feature type="sequence conflict" description="In Ref. 1; AAB86528." evidence="19" ref="1">
    <original>KDF</original>
    <variation>HES</variation>
    <location>
        <begin position="371"/>
        <end position="373"/>
    </location>
</feature>
<feature type="helix" evidence="26">
    <location>
        <begin position="4"/>
        <end position="16"/>
    </location>
</feature>
<feature type="helix" evidence="26">
    <location>
        <begin position="18"/>
        <end position="24"/>
    </location>
</feature>
<feature type="helix" evidence="26">
    <location>
        <begin position="25"/>
        <end position="33"/>
    </location>
</feature>
<feature type="helix" evidence="26">
    <location>
        <begin position="34"/>
        <end position="36"/>
    </location>
</feature>
<feature type="helix" evidence="26">
    <location>
        <begin position="39"/>
        <end position="52"/>
    </location>
</feature>
<feature type="helix" evidence="26">
    <location>
        <begin position="53"/>
        <end position="55"/>
    </location>
</feature>
<feature type="helix" evidence="26">
    <location>
        <begin position="57"/>
        <end position="59"/>
    </location>
</feature>
<feature type="helix" evidence="26">
    <location>
        <begin position="60"/>
        <end position="71"/>
    </location>
</feature>
<feature type="helix" evidence="26">
    <location>
        <begin position="76"/>
        <end position="85"/>
    </location>
</feature>
<feature type="helix" evidence="26">
    <location>
        <begin position="86"/>
        <end position="89"/>
    </location>
</feature>
<feature type="helix" evidence="28">
    <location>
        <begin position="92"/>
        <end position="94"/>
    </location>
</feature>
<feature type="helix" evidence="26">
    <location>
        <begin position="95"/>
        <end position="105"/>
    </location>
</feature>
<feature type="helix" evidence="26">
    <location>
        <begin position="111"/>
        <end position="127"/>
    </location>
</feature>
<feature type="helix" evidence="26">
    <location>
        <begin position="129"/>
        <end position="142"/>
    </location>
</feature>
<feature type="helix" evidence="26">
    <location>
        <begin position="145"/>
        <end position="158"/>
    </location>
</feature>
<feature type="helix" evidence="26">
    <location>
        <begin position="159"/>
        <end position="161"/>
    </location>
</feature>
<feature type="turn" evidence="26">
    <location>
        <begin position="164"/>
        <end position="166"/>
    </location>
</feature>
<feature type="helix" evidence="26">
    <location>
        <begin position="169"/>
        <end position="182"/>
    </location>
</feature>
<feature type="helix" evidence="28">
    <location>
        <begin position="183"/>
        <end position="185"/>
    </location>
</feature>
<feature type="helix" evidence="26">
    <location>
        <begin position="188"/>
        <end position="199"/>
    </location>
</feature>
<feature type="helix" evidence="26">
    <location>
        <begin position="202"/>
        <end position="204"/>
    </location>
</feature>
<feature type="helix" evidence="26">
    <location>
        <begin position="207"/>
        <end position="221"/>
    </location>
</feature>
<feature type="turn" evidence="26">
    <location>
        <begin position="222"/>
        <end position="224"/>
    </location>
</feature>
<feature type="strand" evidence="27">
    <location>
        <begin position="229"/>
        <end position="231"/>
    </location>
</feature>
<feature type="helix" evidence="26">
    <location>
        <begin position="232"/>
        <end position="245"/>
    </location>
</feature>
<feature type="helix" evidence="26">
    <location>
        <begin position="246"/>
        <end position="248"/>
    </location>
</feature>
<feature type="strand" evidence="28">
    <location>
        <begin position="251"/>
        <end position="253"/>
    </location>
</feature>
<feature type="helix" evidence="26">
    <location>
        <begin position="256"/>
        <end position="265"/>
    </location>
</feature>
<feature type="helix" evidence="26">
    <location>
        <begin position="267"/>
        <end position="269"/>
    </location>
</feature>
<feature type="helix" evidence="26">
    <location>
        <begin position="282"/>
        <end position="294"/>
    </location>
</feature>
<feature type="helix" evidence="26">
    <location>
        <begin position="303"/>
        <end position="315"/>
    </location>
</feature>
<feature type="helix" evidence="26">
    <location>
        <begin position="340"/>
        <end position="354"/>
    </location>
</feature>
<feature type="helix" evidence="26">
    <location>
        <begin position="359"/>
        <end position="362"/>
    </location>
</feature>
<feature type="turn" evidence="27">
    <location>
        <begin position="368"/>
        <end position="370"/>
    </location>
</feature>
<feature type="helix" evidence="26">
    <location>
        <begin position="371"/>
        <end position="395"/>
    </location>
</feature>
<feature type="helix" evidence="26">
    <location>
        <begin position="402"/>
        <end position="404"/>
    </location>
</feature>
<feature type="helix" evidence="26">
    <location>
        <begin position="406"/>
        <end position="427"/>
    </location>
</feature>
<feature type="strand" evidence="28">
    <location>
        <begin position="430"/>
        <end position="432"/>
    </location>
</feature>
<accession>Q9BZZ5</accession>
<accession>B4DGR0</accession>
<accession>B4DRJ2</accession>
<accession>B4E283</accession>
<accession>D3DR21</accession>
<accession>G3V1C3</accession>
<accession>O15441</accession>
<accession>Q9Y4J7</accession>
<comment type="function">
    <text evidence="3 6 8">Antiapoptotic factor that may have a role in protein assembly. Negatively regulates ACIN1. By binding to ACIN1, it suppresses ACIN1 cleavage from CASP3 and ACIN1-mediated DNA fragmentation. Also known to efficiently suppress E2F1-induced apoptosis. Its depletion enhances the cytotoxic action of the chemotherapeutic drugs.</text>
</comment>
<comment type="subunit">
    <text evidence="4 8 9">Monomer. Interacts with FGF2 and ACIN1.</text>
</comment>
<comment type="interaction">
    <interactant intactId="EBI-1048422">
        <id>Q9BZZ5</id>
    </interactant>
    <interactant intactId="EBI-6976596">
        <id>Q9UKV3-3</id>
        <label>ACIN1</label>
    </interactant>
    <organismsDiffer>false</organismsDiffer>
    <experiments>2</experiments>
</comment>
<comment type="interaction">
    <interactant intactId="EBI-1048422">
        <id>Q9BZZ5</id>
    </interactant>
    <interactant intactId="EBI-348622">
        <id>Q13838</id>
        <label>DDX39B</label>
    </interactant>
    <organismsDiffer>false</organismsDiffer>
    <experiments>2</experiments>
</comment>
<comment type="interaction">
    <interactant intactId="EBI-10989614">
        <id>Q9BZZ5-2</id>
    </interactant>
    <interactant intactId="EBI-702390">
        <id>Q9UBB4</id>
        <label>ATXN10</label>
    </interactant>
    <organismsDiffer>false</organismsDiffer>
    <experiments>3</experiments>
</comment>
<comment type="interaction">
    <interactant intactId="EBI-10989614">
        <id>Q9BZZ5-2</id>
    </interactant>
    <interactant intactId="EBI-10171799">
        <id>A1A5D9</id>
        <label>BICDL2</label>
    </interactant>
    <organismsDiffer>false</organismsDiffer>
    <experiments>3</experiments>
</comment>
<comment type="interaction">
    <interactant intactId="EBI-10989614">
        <id>Q9BZZ5-2</id>
    </interactant>
    <interactant intactId="EBI-713665">
        <id>P19404</id>
        <label>NDUFV2</label>
    </interactant>
    <organismsDiffer>false</organismsDiffer>
    <experiments>3</experiments>
</comment>
<comment type="subcellular location">
    <subcellularLocation>
        <location evidence="4">Nucleus</location>
    </subcellularLocation>
    <subcellularLocation>
        <location evidence="4">Cytoplasm</location>
    </subcellularLocation>
    <text>Mainly nuclear. Can also be cytoplasmic.</text>
</comment>
<comment type="subcellular location">
    <molecule>Isoform 3</molecule>
    <subcellularLocation>
        <location>Cytoplasm</location>
    </subcellularLocation>
</comment>
<comment type="alternative products">
    <event type="alternative splicing"/>
    <isoform>
        <id>Q9BZZ5-4</id>
        <name>4</name>
        <sequence type="displayed"/>
    </isoform>
    <isoform>
        <id>Q9BZZ5-1</id>
        <name>1</name>
        <name>FIF-510</name>
        <sequence type="described" ref="VSP_041969 VSP_041972"/>
    </isoform>
    <isoform>
        <id>Q9BZZ5-2</id>
        <name>2</name>
        <name>FIF-504</name>
        <sequence type="described" ref="VSP_041970 VSP_041971"/>
    </isoform>
    <isoform>
        <id>Q9BZZ5-3</id>
        <name>3</name>
        <name>FIF C1</name>
        <sequence type="described" ref="VSP_039761 VSP_039762"/>
    </isoform>
    <isoform>
        <id>Q9BZZ5-5</id>
        <name>5</name>
        <sequence type="described" ref="VSP_043289 VSP_041970 VSP_041971"/>
    </isoform>
    <isoform>
        <id>Q9BZZ5-6</id>
        <name>6</name>
        <sequence type="described" ref="VSP_057412"/>
    </isoform>
    <text>Additional isoforms seem to exist.</text>
</comment>
<comment type="tissue specificity">
    <text evidence="3 4 5 7 8">Expressed in all tissues tested, including heart, brain, placenta, lung, liver, skeletal muscle, kidney and pancreas. Highest levels in heart, pancreas and placenta. Highly expressed in several cancers. Preferentially expressed in squamous cell carcinoma versus adenocarcinoma in non-small cell lung cancer.</text>
</comment>
<comment type="domain">
    <text>Two regions, an N-terminal (aa 96-107) and a C-terminal (aa 274-311) are required for binding FGF2.</text>
</comment>
<comment type="PTM">
    <text evidence="9">Acetylation at Lys-251 impairs antiapoptotic function.</text>
</comment>
<comment type="similarity">
    <text evidence="19">Belongs to the API5 family.</text>
</comment>
<comment type="sequence caution" evidence="19">
    <conflict type="erroneous initiation">
        <sequence resource="EMBL-CDS" id="AAB86528"/>
    </conflict>
    <text>Extended N-terminus.</text>
</comment>
<comment type="sequence caution" evidence="19">
    <conflict type="frameshift">
        <sequence resource="EMBL-CDS" id="AAB86528"/>
    </conflict>
</comment>